<keyword id="KW-0238">DNA-binding</keyword>
<keyword id="KW-0678">Repressor</keyword>
<keyword id="KW-0804">Transcription</keyword>
<keyword id="KW-0805">Transcription regulation</keyword>
<accession>Q9R9T9</accession>
<sequence length="213" mass="23876">MARKTAAEAEETRQRIIDAALEVFVAQGVSDATLDQIARKAGVTRGAVYWHFNGKLEVLQAVLASRQHPLELDFTPDLGIERSWEAVVVAMLDAVHSPQSKQFSEILIYQGLDESGLIHNRMVQASDRFLQYIHQVLRHAVTQGELPINLDLQTSIGVFKGLITGLLYEGLRSKDQQAQIIKVALGSFWALLREPPRFLLCEEAQIKQVKSFE</sequence>
<dbReference type="EMBL" id="AF061937">
    <property type="protein sequence ID" value="AAF16682.1"/>
    <property type="molecule type" value="Genomic_DNA"/>
</dbReference>
<dbReference type="SMR" id="Q9R9T9"/>
<dbReference type="IntAct" id="Q9R9T9">
    <property type="interactions" value="1"/>
</dbReference>
<dbReference type="GO" id="GO:0003700">
    <property type="term" value="F:DNA-binding transcription factor activity"/>
    <property type="evidence" value="ECO:0007669"/>
    <property type="project" value="TreeGrafter"/>
</dbReference>
<dbReference type="GO" id="GO:0000976">
    <property type="term" value="F:transcription cis-regulatory region binding"/>
    <property type="evidence" value="ECO:0007669"/>
    <property type="project" value="TreeGrafter"/>
</dbReference>
<dbReference type="Gene3D" id="1.10.357.10">
    <property type="entry name" value="Tetracycline Repressor, domain 2"/>
    <property type="match status" value="1"/>
</dbReference>
<dbReference type="InterPro" id="IPR023772">
    <property type="entry name" value="DNA-bd_HTH_TetR-type_CS"/>
</dbReference>
<dbReference type="InterPro" id="IPR009057">
    <property type="entry name" value="Homeodomain-like_sf"/>
</dbReference>
<dbReference type="InterPro" id="IPR050109">
    <property type="entry name" value="HTH-type_TetR-like_transc_reg"/>
</dbReference>
<dbReference type="InterPro" id="IPR001647">
    <property type="entry name" value="HTH_TetR"/>
</dbReference>
<dbReference type="InterPro" id="IPR036271">
    <property type="entry name" value="Tet_transcr_reg_TetR-rel_C_sf"/>
</dbReference>
<dbReference type="PANTHER" id="PTHR30055:SF240">
    <property type="entry name" value="HTH-TYPE TRANSCRIPTIONAL REGULATOR ACRR"/>
    <property type="match status" value="1"/>
</dbReference>
<dbReference type="PANTHER" id="PTHR30055">
    <property type="entry name" value="HTH-TYPE TRANSCRIPTIONAL REGULATOR RUTR"/>
    <property type="match status" value="1"/>
</dbReference>
<dbReference type="Pfam" id="PF00440">
    <property type="entry name" value="TetR_N"/>
    <property type="match status" value="1"/>
</dbReference>
<dbReference type="PRINTS" id="PR00455">
    <property type="entry name" value="HTHTETR"/>
</dbReference>
<dbReference type="SUPFAM" id="SSF46689">
    <property type="entry name" value="Homeodomain-like"/>
    <property type="match status" value="1"/>
</dbReference>
<dbReference type="SUPFAM" id="SSF48498">
    <property type="entry name" value="Tetracyclin repressor-like, C-terminal domain"/>
    <property type="match status" value="1"/>
</dbReference>
<dbReference type="PROSITE" id="PS01081">
    <property type="entry name" value="HTH_TETR_1"/>
    <property type="match status" value="1"/>
</dbReference>
<dbReference type="PROSITE" id="PS50977">
    <property type="entry name" value="HTH_TETR_2"/>
    <property type="match status" value="1"/>
</dbReference>
<evidence type="ECO:0000255" key="1">
    <source>
        <dbReference type="PROSITE-ProRule" id="PRU00335"/>
    </source>
</evidence>
<gene>
    <name type="primary">srpR</name>
</gene>
<name>SRPR_PSEPU</name>
<proteinExistence type="evidence at protein level"/>
<feature type="chain" id="PRO_0000070627" description="HTH-type transcriptional regulator SrpR">
    <location>
        <begin position="1"/>
        <end position="213"/>
    </location>
</feature>
<feature type="domain" description="HTH tetR-type" evidence="1">
    <location>
        <begin position="10"/>
        <end position="70"/>
    </location>
</feature>
<feature type="DNA-binding region" description="H-T-H motif" evidence="1">
    <location>
        <begin position="33"/>
        <end position="52"/>
    </location>
</feature>
<protein>
    <recommendedName>
        <fullName>HTH-type transcriptional regulator SrpR</fullName>
    </recommendedName>
    <alternativeName>
        <fullName>Solvent efflux pump srpABC operon corepressor</fullName>
    </alternativeName>
</protein>
<organism>
    <name type="scientific">Pseudomonas putida</name>
    <name type="common">Arthrobacter siderocapsulatus</name>
    <dbReference type="NCBI Taxonomy" id="303"/>
    <lineage>
        <taxon>Bacteria</taxon>
        <taxon>Pseudomonadati</taxon>
        <taxon>Pseudomonadota</taxon>
        <taxon>Gammaproteobacteria</taxon>
        <taxon>Pseudomonadales</taxon>
        <taxon>Pseudomonadaceae</taxon>
        <taxon>Pseudomonas</taxon>
    </lineage>
</organism>
<comment type="function">
    <text>In conjunction with SrpS represses the srpABC operon.</text>
</comment>
<reference key="1">
    <citation type="submission" date="1998-04" db="EMBL/GenBank/DDBJ databases">
        <authorList>
            <person name="Dennis J.J."/>
            <person name="Zylstra G.J."/>
        </authorList>
    </citation>
    <scope>NUCLEOTIDE SEQUENCE [GENOMIC DNA]</scope>
    <source>
        <strain>ATCC 700801 / S12</strain>
    </source>
</reference>
<reference key="2">
    <citation type="journal article" date="2001" name="J. Biol. Chem.">
        <title>An insertion sequence prepares Pseudomonas putida S12 for severe solvent stress.</title>
        <authorList>
            <person name="Wery J."/>
            <person name="Hidayat B."/>
            <person name="Kieboom J."/>
            <person name="de Bont J.A.M."/>
        </authorList>
    </citation>
    <scope>CHARACTERIZATION</scope>
    <source>
        <strain>ATCC 700801 / S12</strain>
    </source>
</reference>